<accession>B3LT42</accession>
<comment type="function">
    <text evidence="1">Inhibitor of the DOA4 deubiquitinase involved in the regulation of protein degradation by the proteasome and maintenance of a normal level of free ubiquitin.</text>
</comment>
<comment type="subunit">
    <text evidence="1">Interacts with BRO1 and DOA4.</text>
</comment>
<comment type="subcellular location">
    <subcellularLocation>
        <location evidence="1">Endosome</location>
    </subcellularLocation>
</comment>
<comment type="similarity">
    <text evidence="2">Belongs to the RFU1 family.</text>
</comment>
<organism>
    <name type="scientific">Saccharomyces cerevisiae (strain RM11-1a)</name>
    <name type="common">Baker's yeast</name>
    <dbReference type="NCBI Taxonomy" id="285006"/>
    <lineage>
        <taxon>Eukaryota</taxon>
        <taxon>Fungi</taxon>
        <taxon>Dikarya</taxon>
        <taxon>Ascomycota</taxon>
        <taxon>Saccharomycotina</taxon>
        <taxon>Saccharomycetes</taxon>
        <taxon>Saccharomycetales</taxon>
        <taxon>Saccharomycetaceae</taxon>
        <taxon>Saccharomyces</taxon>
    </lineage>
</organism>
<proteinExistence type="inferred from homology"/>
<name>RFU1_YEAS1</name>
<reference key="1">
    <citation type="submission" date="2005-03" db="EMBL/GenBank/DDBJ databases">
        <title>Annotation of the Saccharomyces cerevisiae RM11-1a genome.</title>
        <authorList>
            <consortium name="The Broad Institute Genome Sequencing Platform"/>
            <person name="Birren B.W."/>
            <person name="Lander E.S."/>
            <person name="Galagan J.E."/>
            <person name="Nusbaum C."/>
            <person name="Devon K."/>
            <person name="Cuomo C."/>
            <person name="Jaffe D.B."/>
            <person name="Butler J."/>
            <person name="Alvarez P."/>
            <person name="Gnerre S."/>
            <person name="Grabherr M."/>
            <person name="Kleber M."/>
            <person name="Mauceli E.W."/>
            <person name="Brockman W."/>
            <person name="MacCallum I.A."/>
            <person name="Rounsley S."/>
            <person name="Young S.K."/>
            <person name="LaButti K."/>
            <person name="Pushparaj V."/>
            <person name="DeCaprio D."/>
            <person name="Crawford M."/>
            <person name="Koehrsen M."/>
            <person name="Engels R."/>
            <person name="Montgomery P."/>
            <person name="Pearson M."/>
            <person name="Howarth C."/>
            <person name="Larson L."/>
            <person name="Luoma S."/>
            <person name="White J."/>
            <person name="O'Leary S."/>
            <person name="Kodira C.D."/>
            <person name="Zeng Q."/>
            <person name="Yandava C."/>
            <person name="Alvarado L."/>
            <person name="Pratt S."/>
            <person name="Kruglyak L."/>
        </authorList>
    </citation>
    <scope>NUCLEOTIDE SEQUENCE [LARGE SCALE GENOMIC DNA]</scope>
    <source>
        <strain>RM11-1a</strain>
    </source>
</reference>
<protein>
    <recommendedName>
        <fullName>Regulator of free ubiquitin chains 1</fullName>
    </recommendedName>
</protein>
<evidence type="ECO:0000250" key="1"/>
<evidence type="ECO:0000305" key="2"/>
<dbReference type="EMBL" id="CH408054">
    <property type="protein sequence ID" value="EDV09377.1"/>
    <property type="molecule type" value="Genomic_DNA"/>
</dbReference>
<dbReference type="SMR" id="B3LT42"/>
<dbReference type="HOGENOM" id="CLU_1348926_0_0_1"/>
<dbReference type="OrthoDB" id="3434at4893"/>
<dbReference type="Proteomes" id="UP000008335">
    <property type="component" value="Unassembled WGS sequence"/>
</dbReference>
<dbReference type="GO" id="GO:0005768">
    <property type="term" value="C:endosome"/>
    <property type="evidence" value="ECO:0007669"/>
    <property type="project" value="UniProtKB-SubCell"/>
</dbReference>
<dbReference type="GO" id="GO:0016020">
    <property type="term" value="C:membrane"/>
    <property type="evidence" value="ECO:0007669"/>
    <property type="project" value="TreeGrafter"/>
</dbReference>
<dbReference type="GO" id="GO:0004869">
    <property type="term" value="F:cysteine-type endopeptidase inhibitor activity"/>
    <property type="evidence" value="ECO:0007669"/>
    <property type="project" value="UniProtKB-KW"/>
</dbReference>
<dbReference type="GO" id="GO:0061578">
    <property type="term" value="F:K63-linked deubiquitinase activity"/>
    <property type="evidence" value="ECO:0007669"/>
    <property type="project" value="TreeGrafter"/>
</dbReference>
<dbReference type="GO" id="GO:0070536">
    <property type="term" value="P:protein K63-linked deubiquitination"/>
    <property type="evidence" value="ECO:0007669"/>
    <property type="project" value="TreeGrafter"/>
</dbReference>
<dbReference type="Gene3D" id="1.20.58.80">
    <property type="entry name" value="Phosphotransferase system, lactose/cellobiose-type IIA subunit"/>
    <property type="match status" value="1"/>
</dbReference>
<dbReference type="PANTHER" id="PTHR12947">
    <property type="entry name" value="AMSH-LIKE PROTEASE"/>
    <property type="match status" value="1"/>
</dbReference>
<dbReference type="PANTHER" id="PTHR12947:SF13">
    <property type="entry name" value="FI19924P1"/>
    <property type="match status" value="1"/>
</dbReference>
<feature type="chain" id="PRO_0000376815" description="Regulator of free ubiquitin chains 1">
    <location>
        <begin position="1"/>
        <end position="200"/>
    </location>
</feature>
<sequence>MKSSKQLVQDAKDYRFNPAIPLRIYLKTCIGILEKAQCAFQANDLSLSFIYYFRYVDLLTNKLSRHPELLRMDASSSSSSSYIHKREYLQLIKLEVPAVCKIIESLRTQIDSQYSKLQTSLANNIAKPNINANTTPVQVEQQPLPKKSFDEYSFNQSISFFQKISNAQLNTGASSQSQATARDEAYRLNYPELPRLTFST</sequence>
<keyword id="KW-0967">Endosome</keyword>
<keyword id="KW-0646">Protease inhibitor</keyword>
<keyword id="KW-0789">Thiol protease inhibitor</keyword>
<gene>
    <name type="primary">RFU1</name>
    <name type="ORF">SCRG_05058</name>
</gene>